<comment type="function">
    <text evidence="1">Catalyzes the reversible adenylation of nicotinate mononucleotide (NaMN) to nicotinic acid adenine dinucleotide (NaAD).</text>
</comment>
<comment type="catalytic activity">
    <reaction evidence="1">
        <text>nicotinate beta-D-ribonucleotide + ATP + H(+) = deamido-NAD(+) + diphosphate</text>
        <dbReference type="Rhea" id="RHEA:22860"/>
        <dbReference type="ChEBI" id="CHEBI:15378"/>
        <dbReference type="ChEBI" id="CHEBI:30616"/>
        <dbReference type="ChEBI" id="CHEBI:33019"/>
        <dbReference type="ChEBI" id="CHEBI:57502"/>
        <dbReference type="ChEBI" id="CHEBI:58437"/>
        <dbReference type="EC" id="2.7.7.18"/>
    </reaction>
</comment>
<comment type="pathway">
    <text evidence="1">Cofactor biosynthesis; NAD(+) biosynthesis; deamido-NAD(+) from nicotinate D-ribonucleotide: step 1/1.</text>
</comment>
<comment type="similarity">
    <text evidence="1">Belongs to the NadD family.</text>
</comment>
<evidence type="ECO:0000255" key="1">
    <source>
        <dbReference type="HAMAP-Rule" id="MF_00244"/>
    </source>
</evidence>
<gene>
    <name evidence="1" type="primary">nadD</name>
    <name type="ordered locus">DSY3161</name>
</gene>
<keyword id="KW-0067">ATP-binding</keyword>
<keyword id="KW-0520">NAD</keyword>
<keyword id="KW-0547">Nucleotide-binding</keyword>
<keyword id="KW-0548">Nucleotidyltransferase</keyword>
<keyword id="KW-0662">Pyridine nucleotide biosynthesis</keyword>
<keyword id="KW-1185">Reference proteome</keyword>
<keyword id="KW-0808">Transferase</keyword>
<reference key="1">
    <citation type="journal article" date="2006" name="J. Bacteriol.">
        <title>Complete genome sequence of the dehalorespiring bacterium Desulfitobacterium hafniense Y51 and comparison with Dehalococcoides ethenogenes 195.</title>
        <authorList>
            <person name="Nonaka H."/>
            <person name="Keresztes G."/>
            <person name="Shinoda Y."/>
            <person name="Ikenaga Y."/>
            <person name="Abe M."/>
            <person name="Naito K."/>
            <person name="Inatomi K."/>
            <person name="Furukawa K."/>
            <person name="Inui M."/>
            <person name="Yukawa H."/>
        </authorList>
    </citation>
    <scope>NUCLEOTIDE SEQUENCE [LARGE SCALE GENOMIC DNA]</scope>
    <source>
        <strain>Y51</strain>
    </source>
</reference>
<organism>
    <name type="scientific">Desulfitobacterium hafniense (strain Y51)</name>
    <dbReference type="NCBI Taxonomy" id="138119"/>
    <lineage>
        <taxon>Bacteria</taxon>
        <taxon>Bacillati</taxon>
        <taxon>Bacillota</taxon>
        <taxon>Clostridia</taxon>
        <taxon>Eubacteriales</taxon>
        <taxon>Desulfitobacteriaceae</taxon>
        <taxon>Desulfitobacterium</taxon>
    </lineage>
</organism>
<proteinExistence type="inferred from homology"/>
<dbReference type="EC" id="2.7.7.18" evidence="1"/>
<dbReference type="EMBL" id="AP008230">
    <property type="protein sequence ID" value="BAE84950.1"/>
    <property type="molecule type" value="Genomic_DNA"/>
</dbReference>
<dbReference type="RefSeq" id="WP_011460892.1">
    <property type="nucleotide sequence ID" value="NC_007907.1"/>
</dbReference>
<dbReference type="SMR" id="Q24SP2"/>
<dbReference type="STRING" id="138119.DSY3161"/>
<dbReference type="KEGG" id="dsy:DSY3161"/>
<dbReference type="eggNOG" id="COG1057">
    <property type="taxonomic scope" value="Bacteria"/>
</dbReference>
<dbReference type="HOGENOM" id="CLU_069765_1_1_9"/>
<dbReference type="UniPathway" id="UPA00253">
    <property type="reaction ID" value="UER00332"/>
</dbReference>
<dbReference type="Proteomes" id="UP000001946">
    <property type="component" value="Chromosome"/>
</dbReference>
<dbReference type="GO" id="GO:0005524">
    <property type="term" value="F:ATP binding"/>
    <property type="evidence" value="ECO:0007669"/>
    <property type="project" value="UniProtKB-KW"/>
</dbReference>
<dbReference type="GO" id="GO:0004515">
    <property type="term" value="F:nicotinate-nucleotide adenylyltransferase activity"/>
    <property type="evidence" value="ECO:0007669"/>
    <property type="project" value="UniProtKB-UniRule"/>
</dbReference>
<dbReference type="GO" id="GO:0009435">
    <property type="term" value="P:NAD biosynthetic process"/>
    <property type="evidence" value="ECO:0007669"/>
    <property type="project" value="UniProtKB-UniRule"/>
</dbReference>
<dbReference type="CDD" id="cd02165">
    <property type="entry name" value="NMNAT"/>
    <property type="match status" value="1"/>
</dbReference>
<dbReference type="Gene3D" id="3.40.50.620">
    <property type="entry name" value="HUPs"/>
    <property type="match status" value="1"/>
</dbReference>
<dbReference type="HAMAP" id="MF_00244">
    <property type="entry name" value="NaMN_adenylyltr"/>
    <property type="match status" value="1"/>
</dbReference>
<dbReference type="InterPro" id="IPR004821">
    <property type="entry name" value="Cyt_trans-like"/>
</dbReference>
<dbReference type="InterPro" id="IPR005248">
    <property type="entry name" value="NadD/NMNAT"/>
</dbReference>
<dbReference type="InterPro" id="IPR014729">
    <property type="entry name" value="Rossmann-like_a/b/a_fold"/>
</dbReference>
<dbReference type="NCBIfam" id="TIGR00125">
    <property type="entry name" value="cyt_tran_rel"/>
    <property type="match status" value="1"/>
</dbReference>
<dbReference type="NCBIfam" id="TIGR00482">
    <property type="entry name" value="nicotinate (nicotinamide) nucleotide adenylyltransferase"/>
    <property type="match status" value="1"/>
</dbReference>
<dbReference type="NCBIfam" id="NF000840">
    <property type="entry name" value="PRK00071.1-3"/>
    <property type="match status" value="1"/>
</dbReference>
<dbReference type="PANTHER" id="PTHR39321">
    <property type="entry name" value="NICOTINATE-NUCLEOTIDE ADENYLYLTRANSFERASE-RELATED"/>
    <property type="match status" value="1"/>
</dbReference>
<dbReference type="PANTHER" id="PTHR39321:SF3">
    <property type="entry name" value="PHOSPHOPANTETHEINE ADENYLYLTRANSFERASE"/>
    <property type="match status" value="1"/>
</dbReference>
<dbReference type="Pfam" id="PF01467">
    <property type="entry name" value="CTP_transf_like"/>
    <property type="match status" value="1"/>
</dbReference>
<dbReference type="SUPFAM" id="SSF52374">
    <property type="entry name" value="Nucleotidylyl transferase"/>
    <property type="match status" value="1"/>
</dbReference>
<sequence>MNINAPPKRIGIMGGTFDPLHYGHLVAAEMARHEFALEKVIFIPTGNPPHKVGRRVTSPGDRYEMVKRAVQDNSFFEVSDLEIQRKGYSYTVDTLKELHELYPQHELYFITGADAFREIFTWREVQSVLSLSHFIGASRPGFDPLEFLEELKRDYPEFLPNMHLFDVPALAISSTDIRSRVKEGKPIRYLLPESVRLYIEKTGLYRI</sequence>
<name>NADD_DESHY</name>
<feature type="chain" id="PRO_0000336686" description="Probable nicotinate-nucleotide adenylyltransferase">
    <location>
        <begin position="1"/>
        <end position="207"/>
    </location>
</feature>
<accession>Q24SP2</accession>
<protein>
    <recommendedName>
        <fullName evidence="1">Probable nicotinate-nucleotide adenylyltransferase</fullName>
        <ecNumber evidence="1">2.7.7.18</ecNumber>
    </recommendedName>
    <alternativeName>
        <fullName evidence="1">Deamido-NAD(+) diphosphorylase</fullName>
    </alternativeName>
    <alternativeName>
        <fullName evidence="1">Deamido-NAD(+) pyrophosphorylase</fullName>
    </alternativeName>
    <alternativeName>
        <fullName evidence="1">Nicotinate mononucleotide adenylyltransferase</fullName>
        <shortName evidence="1">NaMN adenylyltransferase</shortName>
    </alternativeName>
</protein>